<comment type="function">
    <text evidence="1">Catalyzes the ATP-dependent amination of UTP to CTP with either L-glutamine or ammonia as the source of nitrogen. Regulates intracellular CTP levels through interactions with the four ribonucleotide triphosphates.</text>
</comment>
<comment type="catalytic activity">
    <reaction evidence="1">
        <text>UTP + L-glutamine + ATP + H2O = CTP + L-glutamate + ADP + phosphate + 2 H(+)</text>
        <dbReference type="Rhea" id="RHEA:26426"/>
        <dbReference type="ChEBI" id="CHEBI:15377"/>
        <dbReference type="ChEBI" id="CHEBI:15378"/>
        <dbReference type="ChEBI" id="CHEBI:29985"/>
        <dbReference type="ChEBI" id="CHEBI:30616"/>
        <dbReference type="ChEBI" id="CHEBI:37563"/>
        <dbReference type="ChEBI" id="CHEBI:43474"/>
        <dbReference type="ChEBI" id="CHEBI:46398"/>
        <dbReference type="ChEBI" id="CHEBI:58359"/>
        <dbReference type="ChEBI" id="CHEBI:456216"/>
        <dbReference type="EC" id="6.3.4.2"/>
    </reaction>
</comment>
<comment type="catalytic activity">
    <reaction evidence="1">
        <text>L-glutamine + H2O = L-glutamate + NH4(+)</text>
        <dbReference type="Rhea" id="RHEA:15889"/>
        <dbReference type="ChEBI" id="CHEBI:15377"/>
        <dbReference type="ChEBI" id="CHEBI:28938"/>
        <dbReference type="ChEBI" id="CHEBI:29985"/>
        <dbReference type="ChEBI" id="CHEBI:58359"/>
    </reaction>
</comment>
<comment type="catalytic activity">
    <reaction evidence="1">
        <text>UTP + NH4(+) + ATP = CTP + ADP + phosphate + 2 H(+)</text>
        <dbReference type="Rhea" id="RHEA:16597"/>
        <dbReference type="ChEBI" id="CHEBI:15378"/>
        <dbReference type="ChEBI" id="CHEBI:28938"/>
        <dbReference type="ChEBI" id="CHEBI:30616"/>
        <dbReference type="ChEBI" id="CHEBI:37563"/>
        <dbReference type="ChEBI" id="CHEBI:43474"/>
        <dbReference type="ChEBI" id="CHEBI:46398"/>
        <dbReference type="ChEBI" id="CHEBI:456216"/>
    </reaction>
</comment>
<comment type="activity regulation">
    <text evidence="1">Allosterically activated by GTP, when glutamine is the substrate; GTP has no effect on the reaction when ammonia is the substrate. The allosteric effector GTP functions by stabilizing the protein conformation that binds the tetrahedral intermediate(s) formed during glutamine hydrolysis. Inhibited by the product CTP, via allosteric rather than competitive inhibition.</text>
</comment>
<comment type="pathway">
    <text evidence="1">Pyrimidine metabolism; CTP biosynthesis via de novo pathway; CTP from UDP: step 2/2.</text>
</comment>
<comment type="subunit">
    <text evidence="1">Homotetramer.</text>
</comment>
<comment type="miscellaneous">
    <text evidence="1">CTPSs have evolved a hybrid strategy for distinguishing between UTP and CTP. The overlapping regions of the product feedback inhibitory and substrate sites recognize a common feature in both compounds, the triphosphate moiety. To differentiate isosteric substrate and product pyrimidine rings, an additional pocket far from the expected kinase/ligase catalytic site, specifically recognizes the cytosine and ribose portions of the product inhibitor.</text>
</comment>
<comment type="similarity">
    <text evidence="1">Belongs to the CTP synthase family.</text>
</comment>
<accession>B4U6A9</accession>
<keyword id="KW-0067">ATP-binding</keyword>
<keyword id="KW-0315">Glutamine amidotransferase</keyword>
<keyword id="KW-0436">Ligase</keyword>
<keyword id="KW-0460">Magnesium</keyword>
<keyword id="KW-0479">Metal-binding</keyword>
<keyword id="KW-0547">Nucleotide-binding</keyword>
<keyword id="KW-0665">Pyrimidine biosynthesis</keyword>
<proteinExistence type="inferred from homology"/>
<name>PYRG_HYDS0</name>
<organism>
    <name type="scientific">Hydrogenobaculum sp. (strain Y04AAS1)</name>
    <dbReference type="NCBI Taxonomy" id="380749"/>
    <lineage>
        <taxon>Bacteria</taxon>
        <taxon>Pseudomonadati</taxon>
        <taxon>Aquificota</taxon>
        <taxon>Aquificia</taxon>
        <taxon>Aquificales</taxon>
        <taxon>Aquificaceae</taxon>
        <taxon>Hydrogenobaculum</taxon>
    </lineage>
</organism>
<evidence type="ECO:0000255" key="1">
    <source>
        <dbReference type="HAMAP-Rule" id="MF_01227"/>
    </source>
</evidence>
<dbReference type="EC" id="6.3.4.2" evidence="1"/>
<dbReference type="EMBL" id="CP001130">
    <property type="protein sequence ID" value="ACG58245.1"/>
    <property type="molecule type" value="Genomic_DNA"/>
</dbReference>
<dbReference type="RefSeq" id="WP_012514601.1">
    <property type="nucleotide sequence ID" value="NC_011126.1"/>
</dbReference>
<dbReference type="SMR" id="B4U6A9"/>
<dbReference type="STRING" id="380749.HY04AAS1_1563"/>
<dbReference type="MEROPS" id="C26.964"/>
<dbReference type="KEGG" id="hya:HY04AAS1_1563"/>
<dbReference type="eggNOG" id="COG0504">
    <property type="taxonomic scope" value="Bacteria"/>
</dbReference>
<dbReference type="HOGENOM" id="CLU_011675_5_0_0"/>
<dbReference type="OrthoDB" id="9801107at2"/>
<dbReference type="UniPathway" id="UPA00159">
    <property type="reaction ID" value="UER00277"/>
</dbReference>
<dbReference type="GO" id="GO:0005829">
    <property type="term" value="C:cytosol"/>
    <property type="evidence" value="ECO:0007669"/>
    <property type="project" value="TreeGrafter"/>
</dbReference>
<dbReference type="GO" id="GO:0005524">
    <property type="term" value="F:ATP binding"/>
    <property type="evidence" value="ECO:0007669"/>
    <property type="project" value="UniProtKB-KW"/>
</dbReference>
<dbReference type="GO" id="GO:0003883">
    <property type="term" value="F:CTP synthase activity"/>
    <property type="evidence" value="ECO:0007669"/>
    <property type="project" value="UniProtKB-UniRule"/>
</dbReference>
<dbReference type="GO" id="GO:0004359">
    <property type="term" value="F:glutaminase activity"/>
    <property type="evidence" value="ECO:0007669"/>
    <property type="project" value="RHEA"/>
</dbReference>
<dbReference type="GO" id="GO:0042802">
    <property type="term" value="F:identical protein binding"/>
    <property type="evidence" value="ECO:0007669"/>
    <property type="project" value="TreeGrafter"/>
</dbReference>
<dbReference type="GO" id="GO:0046872">
    <property type="term" value="F:metal ion binding"/>
    <property type="evidence" value="ECO:0007669"/>
    <property type="project" value="UniProtKB-KW"/>
</dbReference>
<dbReference type="GO" id="GO:0044210">
    <property type="term" value="P:'de novo' CTP biosynthetic process"/>
    <property type="evidence" value="ECO:0007669"/>
    <property type="project" value="UniProtKB-UniRule"/>
</dbReference>
<dbReference type="GO" id="GO:0019856">
    <property type="term" value="P:pyrimidine nucleobase biosynthetic process"/>
    <property type="evidence" value="ECO:0007669"/>
    <property type="project" value="TreeGrafter"/>
</dbReference>
<dbReference type="CDD" id="cd03113">
    <property type="entry name" value="CTPS_N"/>
    <property type="match status" value="1"/>
</dbReference>
<dbReference type="CDD" id="cd01746">
    <property type="entry name" value="GATase1_CTP_Synthase"/>
    <property type="match status" value="1"/>
</dbReference>
<dbReference type="FunFam" id="3.40.50.300:FF:000009">
    <property type="entry name" value="CTP synthase"/>
    <property type="match status" value="1"/>
</dbReference>
<dbReference type="FunFam" id="3.40.50.880:FF:000002">
    <property type="entry name" value="CTP synthase"/>
    <property type="match status" value="1"/>
</dbReference>
<dbReference type="Gene3D" id="3.40.50.880">
    <property type="match status" value="1"/>
</dbReference>
<dbReference type="Gene3D" id="3.40.50.300">
    <property type="entry name" value="P-loop containing nucleotide triphosphate hydrolases"/>
    <property type="match status" value="1"/>
</dbReference>
<dbReference type="HAMAP" id="MF_01227">
    <property type="entry name" value="PyrG"/>
    <property type="match status" value="1"/>
</dbReference>
<dbReference type="InterPro" id="IPR029062">
    <property type="entry name" value="Class_I_gatase-like"/>
</dbReference>
<dbReference type="InterPro" id="IPR004468">
    <property type="entry name" value="CTP_synthase"/>
</dbReference>
<dbReference type="InterPro" id="IPR017456">
    <property type="entry name" value="CTP_synthase_N"/>
</dbReference>
<dbReference type="InterPro" id="IPR017926">
    <property type="entry name" value="GATASE"/>
</dbReference>
<dbReference type="InterPro" id="IPR033828">
    <property type="entry name" value="GATase1_CTP_Synthase"/>
</dbReference>
<dbReference type="InterPro" id="IPR027417">
    <property type="entry name" value="P-loop_NTPase"/>
</dbReference>
<dbReference type="NCBIfam" id="NF003792">
    <property type="entry name" value="PRK05380.1"/>
    <property type="match status" value="1"/>
</dbReference>
<dbReference type="NCBIfam" id="TIGR00337">
    <property type="entry name" value="PyrG"/>
    <property type="match status" value="1"/>
</dbReference>
<dbReference type="PANTHER" id="PTHR11550">
    <property type="entry name" value="CTP SYNTHASE"/>
    <property type="match status" value="1"/>
</dbReference>
<dbReference type="PANTHER" id="PTHR11550:SF0">
    <property type="entry name" value="CTP SYNTHASE-RELATED"/>
    <property type="match status" value="1"/>
</dbReference>
<dbReference type="Pfam" id="PF06418">
    <property type="entry name" value="CTP_synth_N"/>
    <property type="match status" value="1"/>
</dbReference>
<dbReference type="Pfam" id="PF00117">
    <property type="entry name" value="GATase"/>
    <property type="match status" value="1"/>
</dbReference>
<dbReference type="SUPFAM" id="SSF52317">
    <property type="entry name" value="Class I glutamine amidotransferase-like"/>
    <property type="match status" value="1"/>
</dbReference>
<dbReference type="SUPFAM" id="SSF52540">
    <property type="entry name" value="P-loop containing nucleoside triphosphate hydrolases"/>
    <property type="match status" value="1"/>
</dbReference>
<dbReference type="PROSITE" id="PS51273">
    <property type="entry name" value="GATASE_TYPE_1"/>
    <property type="match status" value="1"/>
</dbReference>
<reference key="1">
    <citation type="journal article" date="2009" name="J. Bacteriol.">
        <title>Complete and draft genome sequences of six members of the Aquificales.</title>
        <authorList>
            <person name="Reysenbach A.-L."/>
            <person name="Hamamura N."/>
            <person name="Podar M."/>
            <person name="Griffiths E."/>
            <person name="Ferreira S."/>
            <person name="Hochstein R."/>
            <person name="Heidelberg J."/>
            <person name="Johnson J."/>
            <person name="Mead D."/>
            <person name="Pohorille A."/>
            <person name="Sarmiento M."/>
            <person name="Schweighofer K."/>
            <person name="Seshadri R."/>
            <person name="Voytek M.A."/>
        </authorList>
    </citation>
    <scope>NUCLEOTIDE SEQUENCE [LARGE SCALE GENOMIC DNA]</scope>
    <source>
        <strain>Y04AAS1</strain>
    </source>
</reference>
<protein>
    <recommendedName>
        <fullName evidence="1">CTP synthase</fullName>
        <ecNumber evidence="1">6.3.4.2</ecNumber>
    </recommendedName>
    <alternativeName>
        <fullName evidence="1">Cytidine 5'-triphosphate synthase</fullName>
    </alternativeName>
    <alternativeName>
        <fullName evidence="1">Cytidine triphosphate synthetase</fullName>
        <shortName evidence="1">CTP synthetase</shortName>
        <shortName evidence="1">CTPS</shortName>
    </alternativeName>
    <alternativeName>
        <fullName evidence="1">UTP--ammonia ligase</fullName>
    </alternativeName>
</protein>
<gene>
    <name evidence="1" type="primary">pyrG</name>
    <name type="ordered locus">HY04AAS1_1563</name>
</gene>
<feature type="chain" id="PRO_1000139473" description="CTP synthase">
    <location>
        <begin position="1"/>
        <end position="534"/>
    </location>
</feature>
<feature type="domain" description="Glutamine amidotransferase type-1" evidence="1">
    <location>
        <begin position="294"/>
        <end position="532"/>
    </location>
</feature>
<feature type="region of interest" description="Amidoligase domain" evidence="1">
    <location>
        <begin position="1"/>
        <end position="269"/>
    </location>
</feature>
<feature type="active site" description="Nucleophile; for glutamine hydrolysis" evidence="1">
    <location>
        <position position="379"/>
    </location>
</feature>
<feature type="active site" evidence="1">
    <location>
        <position position="505"/>
    </location>
</feature>
<feature type="active site" evidence="1">
    <location>
        <position position="507"/>
    </location>
</feature>
<feature type="binding site" evidence="1">
    <location>
        <position position="17"/>
    </location>
    <ligand>
        <name>CTP</name>
        <dbReference type="ChEBI" id="CHEBI:37563"/>
        <note>allosteric inhibitor</note>
    </ligand>
</feature>
<feature type="binding site" evidence="1">
    <location>
        <position position="17"/>
    </location>
    <ligand>
        <name>UTP</name>
        <dbReference type="ChEBI" id="CHEBI:46398"/>
    </ligand>
</feature>
<feature type="binding site" evidence="1">
    <location>
        <begin position="18"/>
        <end position="23"/>
    </location>
    <ligand>
        <name>ATP</name>
        <dbReference type="ChEBI" id="CHEBI:30616"/>
    </ligand>
</feature>
<feature type="binding site" evidence="1">
    <location>
        <position position="58"/>
    </location>
    <ligand>
        <name>L-glutamine</name>
        <dbReference type="ChEBI" id="CHEBI:58359"/>
    </ligand>
</feature>
<feature type="binding site" evidence="1">
    <location>
        <position position="75"/>
    </location>
    <ligand>
        <name>ATP</name>
        <dbReference type="ChEBI" id="CHEBI:30616"/>
    </ligand>
</feature>
<feature type="binding site" evidence="1">
    <location>
        <position position="75"/>
    </location>
    <ligand>
        <name>Mg(2+)</name>
        <dbReference type="ChEBI" id="CHEBI:18420"/>
    </ligand>
</feature>
<feature type="binding site" evidence="1">
    <location>
        <position position="143"/>
    </location>
    <ligand>
        <name>Mg(2+)</name>
        <dbReference type="ChEBI" id="CHEBI:18420"/>
    </ligand>
</feature>
<feature type="binding site" evidence="1">
    <location>
        <begin position="150"/>
        <end position="152"/>
    </location>
    <ligand>
        <name>CTP</name>
        <dbReference type="ChEBI" id="CHEBI:37563"/>
        <note>allosteric inhibitor</note>
    </ligand>
</feature>
<feature type="binding site" evidence="1">
    <location>
        <begin position="190"/>
        <end position="195"/>
    </location>
    <ligand>
        <name>CTP</name>
        <dbReference type="ChEBI" id="CHEBI:37563"/>
        <note>allosteric inhibitor</note>
    </ligand>
</feature>
<feature type="binding site" evidence="1">
    <location>
        <begin position="190"/>
        <end position="195"/>
    </location>
    <ligand>
        <name>UTP</name>
        <dbReference type="ChEBI" id="CHEBI:46398"/>
    </ligand>
</feature>
<feature type="binding site" evidence="1">
    <location>
        <position position="226"/>
    </location>
    <ligand>
        <name>CTP</name>
        <dbReference type="ChEBI" id="CHEBI:37563"/>
        <note>allosteric inhibitor</note>
    </ligand>
</feature>
<feature type="binding site" evidence="1">
    <location>
        <position position="226"/>
    </location>
    <ligand>
        <name>UTP</name>
        <dbReference type="ChEBI" id="CHEBI:46398"/>
    </ligand>
</feature>
<feature type="binding site" evidence="1">
    <location>
        <position position="352"/>
    </location>
    <ligand>
        <name>L-glutamine</name>
        <dbReference type="ChEBI" id="CHEBI:58359"/>
    </ligand>
</feature>
<feature type="binding site" evidence="1">
    <location>
        <begin position="380"/>
        <end position="383"/>
    </location>
    <ligand>
        <name>L-glutamine</name>
        <dbReference type="ChEBI" id="CHEBI:58359"/>
    </ligand>
</feature>
<feature type="binding site" evidence="1">
    <location>
        <position position="403"/>
    </location>
    <ligand>
        <name>L-glutamine</name>
        <dbReference type="ChEBI" id="CHEBI:58359"/>
    </ligand>
</feature>
<feature type="binding site" evidence="1">
    <location>
        <position position="460"/>
    </location>
    <ligand>
        <name>L-glutamine</name>
        <dbReference type="ChEBI" id="CHEBI:58359"/>
    </ligand>
</feature>
<sequence>MHVSNSKFIFVTGGVLSSLGKGVASASIGALLEGLGLSITLQKLDPYLNVDPGTMNPYQHGEVFVTEDGAETDLDLGHYERFTNTNLSKLNNITAGKIYNSVLEKERKGAYLGSTVQVIPHVTDEIKSMILKASKDKDIAIVEIGGTVGDIESLPFLEAIRQLQLEIGKENTLFIHLTYVPYISVAGELKTKPTQHSVKELRAIGIQPDIIICRSEVELPQDVKSKIAMFCNVKPENVISAYDVDYIYKIPLILKAQNLDKIIIDAFRLENKEPNLTKWENIVSSLEHLKDSVDIAIVGKYIKLKDAYKSLIEALIHGGIEHKLKVNMIWVDSENLNEKDLEHVDGILIPGGFGERGIEGKIRALNYGRTKNIPTFGICLGMQLMAVEFARNVLGFKDANSTEFDPNTSNPVIDIMEEQKGIENLGGTMRLGAYECLIKENTKAYEIYKENLIYERHRHRYEFNNKYKEHFEKHGFIASGIYPKKSLVEIIELQNHRWYIGCQFHPEFKSKPFKAHKLFASFIENAYIYKKERS</sequence>